<reference key="1">
    <citation type="journal article" date="2004" name="Proc. Natl. Acad. Sci. U.S.A.">
        <title>Complete genomes of two clinical Staphylococcus aureus strains: evidence for the rapid evolution of virulence and drug resistance.</title>
        <authorList>
            <person name="Holden M.T.G."/>
            <person name="Feil E.J."/>
            <person name="Lindsay J.A."/>
            <person name="Peacock S.J."/>
            <person name="Day N.P.J."/>
            <person name="Enright M.C."/>
            <person name="Foster T.J."/>
            <person name="Moore C.E."/>
            <person name="Hurst L."/>
            <person name="Atkin R."/>
            <person name="Barron A."/>
            <person name="Bason N."/>
            <person name="Bentley S.D."/>
            <person name="Chillingworth C."/>
            <person name="Chillingworth T."/>
            <person name="Churcher C."/>
            <person name="Clark L."/>
            <person name="Corton C."/>
            <person name="Cronin A."/>
            <person name="Doggett J."/>
            <person name="Dowd L."/>
            <person name="Feltwell T."/>
            <person name="Hance Z."/>
            <person name="Harris B."/>
            <person name="Hauser H."/>
            <person name="Holroyd S."/>
            <person name="Jagels K."/>
            <person name="James K.D."/>
            <person name="Lennard N."/>
            <person name="Line A."/>
            <person name="Mayes R."/>
            <person name="Moule S."/>
            <person name="Mungall K."/>
            <person name="Ormond D."/>
            <person name="Quail M.A."/>
            <person name="Rabbinowitsch E."/>
            <person name="Rutherford K.M."/>
            <person name="Sanders M."/>
            <person name="Sharp S."/>
            <person name="Simmonds M."/>
            <person name="Stevens K."/>
            <person name="Whitehead S."/>
            <person name="Barrell B.G."/>
            <person name="Spratt B.G."/>
            <person name="Parkhill J."/>
        </authorList>
    </citation>
    <scope>NUCLEOTIDE SEQUENCE [LARGE SCALE GENOMIC DNA]</scope>
    <source>
        <strain>MRSA252</strain>
    </source>
</reference>
<comment type="function">
    <text evidence="2">Cysteine protease that plays an important role in the inhibition of host innate immune response. Cleaves host elastins found in connective tissues, pulmonary surfactant protein A in the lungs, and the chemokine receptor CXCR2 on leukocytes. Proteolytic cleavage of surfactant protein A impairs bacterial phagocytosis by neutrophils while CXCR2 degradation blocks neutrophil activation and chemotaxis. Additionally, promotes vascular leakage by activating the plasma kallikerin/kinin system, resulting in hypotension.</text>
</comment>
<comment type="catalytic activity">
    <reaction>
        <text>Broad endopeptidase action on proteins including elastin, but rather limited hydrolysis of small-molecule substrates. Assays are conveniently made with hemoglobin, casein or Z-Phe-Arg-NHMec as substrate.</text>
        <dbReference type="EC" id="3.4.22.48"/>
    </reaction>
</comment>
<comment type="activity regulation">
    <text evidence="1">Prematurely activated/folded staphopain A is inhibited by staphostatin A (ScpB), which is probably required to protect staphylococcal cytoplasmic proteins from degradation by ScpA.</text>
</comment>
<comment type="subunit">
    <text evidence="1">In the cytoplasm, prematurely activated/folded ScpA forms a stable non-covalent complex with ScpB.</text>
</comment>
<comment type="subcellular location">
    <subcellularLocation>
        <location evidence="2">Secreted</location>
    </subcellularLocation>
</comment>
<comment type="PTM">
    <text evidence="1">Cleavage leads to the activation of ScpA probably by an auto-catalytic manner.</text>
</comment>
<comment type="miscellaneous">
    <text evidence="1">The catalytic maturation of ScpA appears to reside outside the cascade of activation started by the metalloprotease aureolysin (aur).</text>
</comment>
<comment type="similarity">
    <text evidence="5">Belongs to the peptidase C47 family.</text>
</comment>
<name>SSPP_STAAR</name>
<protein>
    <recommendedName>
        <fullName>Staphopain A</fullName>
        <ecNumber>3.4.22.48</ecNumber>
    </recommendedName>
    <alternativeName>
        <fullName>Staphylococcal cysteine proteinase A</fullName>
    </alternativeName>
    <alternativeName>
        <fullName>Staphylopain A</fullName>
    </alternativeName>
</protein>
<evidence type="ECO:0000250" key="1"/>
<evidence type="ECO:0000250" key="2">
    <source>
        <dbReference type="UniProtKB" id="P81297"/>
    </source>
</evidence>
<evidence type="ECO:0000255" key="3"/>
<evidence type="ECO:0000255" key="4">
    <source>
        <dbReference type="PROSITE-ProRule" id="PRU10089"/>
    </source>
</evidence>
<evidence type="ECO:0000305" key="5"/>
<feature type="signal peptide" evidence="3">
    <location>
        <begin position="1"/>
        <end position="25"/>
    </location>
</feature>
<feature type="propeptide" id="PRO_0000026553" evidence="1">
    <location>
        <begin position="26"/>
        <end position="214"/>
    </location>
</feature>
<feature type="chain" id="PRO_0000026554" description="Staphopain A">
    <location>
        <begin position="215"/>
        <end position="388"/>
    </location>
</feature>
<feature type="active site" evidence="4">
    <location>
        <position position="238"/>
    </location>
</feature>
<feature type="active site" evidence="4">
    <location>
        <position position="334"/>
    </location>
</feature>
<feature type="active site" evidence="4">
    <location>
        <position position="355"/>
    </location>
</feature>
<feature type="site" description="Cleavage" evidence="1">
    <location>
        <begin position="214"/>
        <end position="215"/>
    </location>
</feature>
<gene>
    <name type="primary">sspP</name>
    <name type="synonym">scpA</name>
    <name type="ordered locus">SAR2001</name>
</gene>
<dbReference type="EC" id="3.4.22.48"/>
<dbReference type="EMBL" id="BX571856">
    <property type="protein sequence ID" value="CAG40986.1"/>
    <property type="molecule type" value="Genomic_DNA"/>
</dbReference>
<dbReference type="RefSeq" id="WP_000827736.1">
    <property type="nucleotide sequence ID" value="NC_002952.2"/>
</dbReference>
<dbReference type="SMR" id="Q6GFE8"/>
<dbReference type="MEROPS" id="C47.001"/>
<dbReference type="KEGG" id="sar:SAR2001"/>
<dbReference type="HOGENOM" id="CLU_069043_0_0_9"/>
<dbReference type="PRO" id="PR:Q6GFE8"/>
<dbReference type="Proteomes" id="UP000000596">
    <property type="component" value="Chromosome"/>
</dbReference>
<dbReference type="GO" id="GO:0005576">
    <property type="term" value="C:extracellular region"/>
    <property type="evidence" value="ECO:0007669"/>
    <property type="project" value="UniProtKB-SubCell"/>
</dbReference>
<dbReference type="GO" id="GO:0008234">
    <property type="term" value="F:cysteine-type peptidase activity"/>
    <property type="evidence" value="ECO:0007669"/>
    <property type="project" value="UniProtKB-KW"/>
</dbReference>
<dbReference type="GO" id="GO:0006508">
    <property type="term" value="P:proteolysis"/>
    <property type="evidence" value="ECO:0007669"/>
    <property type="project" value="UniProtKB-KW"/>
</dbReference>
<dbReference type="Gene3D" id="3.90.70.10">
    <property type="entry name" value="Cysteine proteinases"/>
    <property type="match status" value="1"/>
</dbReference>
<dbReference type="Gene3D" id="3.10.500.10">
    <property type="entry name" value="Staphopain proregion domain"/>
    <property type="match status" value="1"/>
</dbReference>
<dbReference type="InterPro" id="IPR046350">
    <property type="entry name" value="Cystatin_sf"/>
</dbReference>
<dbReference type="InterPro" id="IPR038765">
    <property type="entry name" value="Papain-like_cys_pep_sf"/>
</dbReference>
<dbReference type="InterPro" id="IPR025660">
    <property type="entry name" value="Pept_his_AS"/>
</dbReference>
<dbReference type="InterPro" id="IPR008750">
    <property type="entry name" value="Peptidase_C47"/>
</dbReference>
<dbReference type="InterPro" id="IPR028076">
    <property type="entry name" value="Staphopain_pro"/>
</dbReference>
<dbReference type="InterPro" id="IPR037155">
    <property type="entry name" value="Staphopain_pro_sf"/>
</dbReference>
<dbReference type="Pfam" id="PF05543">
    <property type="entry name" value="Peptidase_C47"/>
    <property type="match status" value="1"/>
</dbReference>
<dbReference type="Pfam" id="PF14731">
    <property type="entry name" value="Staphopain_pro"/>
    <property type="match status" value="1"/>
</dbReference>
<dbReference type="SUPFAM" id="SSF54403">
    <property type="entry name" value="Cystatin/monellin"/>
    <property type="match status" value="1"/>
</dbReference>
<dbReference type="SUPFAM" id="SSF54001">
    <property type="entry name" value="Cysteine proteinases"/>
    <property type="match status" value="1"/>
</dbReference>
<dbReference type="PROSITE" id="PS00639">
    <property type="entry name" value="THIOL_PROTEASE_HIS"/>
    <property type="match status" value="1"/>
</dbReference>
<keyword id="KW-0378">Hydrolase</keyword>
<keyword id="KW-0645">Protease</keyword>
<keyword id="KW-0964">Secreted</keyword>
<keyword id="KW-0732">Signal</keyword>
<keyword id="KW-0788">Thiol protease</keyword>
<keyword id="KW-0843">Virulence</keyword>
<keyword id="KW-0865">Zymogen</keyword>
<accession>Q6GFE8</accession>
<sequence>MKRNFPKLIALSLIFSLSITPIANAESNSNIKAKDKRHVQVNVEDKSVPTDVRNLAQKDYLSYVTSLDKIYNKEKASYTLGEPFKIYKFNKKSDGNYYFPVLNTEGNIDYIVTISPKVTKDSSSSSKYTINVSSFLSKALNEYKDQQITILTNSKGYYVVTQNHKAKLVLKTPRLEDKKAKKTESIPTGNNVTQLKQKASVTMPTSQFKSNNYTYNEQYVNKLENFKIRETQGNNGWCAGYTMSALLNATYNTNKYHAEAVMRFLHPNLQGQQFQFTGLTPREMIYFGQTQGRSPQLLNRMTTYNEVDNLTKNNKGIAILGSRVESRNGMHAGHAMAVVGNAKLNNGQEVIIIWNPWDNGFMTQDAKNNVIPVSNGDHYQWYSSIYGY</sequence>
<proteinExistence type="inferred from homology"/>
<organism>
    <name type="scientific">Staphylococcus aureus (strain MRSA252)</name>
    <dbReference type="NCBI Taxonomy" id="282458"/>
    <lineage>
        <taxon>Bacteria</taxon>
        <taxon>Bacillati</taxon>
        <taxon>Bacillota</taxon>
        <taxon>Bacilli</taxon>
        <taxon>Bacillales</taxon>
        <taxon>Staphylococcaceae</taxon>
        <taxon>Staphylococcus</taxon>
    </lineage>
</organism>